<protein>
    <recommendedName>
        <fullName evidence="2 4">Carboxysome shell protein CcmK2</fullName>
    </recommendedName>
    <alternativeName>
        <fullName evidence="2">Carbon dioxide-concentrating mechanism protein CcmK2</fullName>
    </alternativeName>
</protein>
<gene>
    <name evidence="2 4" type="primary">ccmK2</name>
    <name type="ordered locus">tll0947</name>
</gene>
<sequence>MPIAVGMIETRGFPAVVEAADAMVKAARVTLVGYEKIGSGRVTVIVRGDVSEVQASVAAGVDSAKRVNGGEVLSTHIIARPHENLEYVLPIRYTEAVEQFRN</sequence>
<keyword id="KW-0002">3D-structure</keyword>
<keyword id="KW-1283">Bacterial microcompartment</keyword>
<keyword id="KW-0120">Carbon dioxide fixation</keyword>
<keyword id="KW-1282">Carboxysome</keyword>
<keyword id="KW-0602">Photosynthesis</keyword>
<keyword id="KW-1185">Reference proteome</keyword>
<dbReference type="EMBL" id="BA000039">
    <property type="protein sequence ID" value="BAC08499.1"/>
    <property type="molecule type" value="Genomic_DNA"/>
</dbReference>
<dbReference type="RefSeq" id="NP_681737.1">
    <property type="nucleotide sequence ID" value="NC_004113.1"/>
</dbReference>
<dbReference type="RefSeq" id="WP_011056791.1">
    <property type="nucleotide sequence ID" value="NC_004113.1"/>
</dbReference>
<dbReference type="PDB" id="3SSQ">
    <property type="method" value="X-ray"/>
    <property type="resolution" value="2.20 A"/>
    <property type="chains" value="A/B/C/D/E/F=1-102"/>
</dbReference>
<dbReference type="PDB" id="3SSR">
    <property type="method" value="X-ray"/>
    <property type="resolution" value="1.60 A"/>
    <property type="chains" value="A/B=1-102"/>
</dbReference>
<dbReference type="PDBsum" id="3SSQ"/>
<dbReference type="PDBsum" id="3SSR"/>
<dbReference type="SMR" id="Q8DKB2"/>
<dbReference type="DIP" id="DIP-59852N"/>
<dbReference type="IntAct" id="Q8DKB2">
    <property type="interactions" value="2"/>
</dbReference>
<dbReference type="STRING" id="197221.gene:10747539"/>
<dbReference type="EnsemblBacteria" id="BAC08499">
    <property type="protein sequence ID" value="BAC08499"/>
    <property type="gene ID" value="BAC08499"/>
</dbReference>
<dbReference type="KEGG" id="tel:tll0947"/>
<dbReference type="PATRIC" id="fig|197221.4.peg.994"/>
<dbReference type="eggNOG" id="COG4577">
    <property type="taxonomic scope" value="Bacteria"/>
</dbReference>
<dbReference type="EvolutionaryTrace" id="Q8DKB2"/>
<dbReference type="Proteomes" id="UP000000440">
    <property type="component" value="Chromosome"/>
</dbReference>
<dbReference type="GO" id="GO:0031470">
    <property type="term" value="C:carboxysome"/>
    <property type="evidence" value="ECO:0007669"/>
    <property type="project" value="UniProtKB-SubCell"/>
</dbReference>
<dbReference type="GO" id="GO:0042802">
    <property type="term" value="F:identical protein binding"/>
    <property type="evidence" value="ECO:0000353"/>
    <property type="project" value="IntAct"/>
</dbReference>
<dbReference type="GO" id="GO:0043886">
    <property type="term" value="F:structural constituent of carboxysome shell"/>
    <property type="evidence" value="ECO:0007669"/>
    <property type="project" value="UniProtKB-UniRule"/>
</dbReference>
<dbReference type="GO" id="GO:0015977">
    <property type="term" value="P:carbon fixation"/>
    <property type="evidence" value="ECO:0007669"/>
    <property type="project" value="UniProtKB-UniRule"/>
</dbReference>
<dbReference type="GO" id="GO:0015979">
    <property type="term" value="P:photosynthesis"/>
    <property type="evidence" value="ECO:0007669"/>
    <property type="project" value="UniProtKB-KW"/>
</dbReference>
<dbReference type="CDD" id="cd07057">
    <property type="entry name" value="BMC_CcmK"/>
    <property type="match status" value="1"/>
</dbReference>
<dbReference type="FunFam" id="3.30.70.1710:FF:000001">
    <property type="entry name" value="Ethanolamine utilization protein EutM"/>
    <property type="match status" value="1"/>
</dbReference>
<dbReference type="Gene3D" id="3.30.70.1710">
    <property type="match status" value="1"/>
</dbReference>
<dbReference type="HAMAP" id="MF_00854">
    <property type="entry name" value="CcmK"/>
    <property type="match status" value="1"/>
</dbReference>
<dbReference type="InterPro" id="IPR020808">
    <property type="entry name" value="Bact_microcomp_CS"/>
</dbReference>
<dbReference type="InterPro" id="IPR000249">
    <property type="entry name" value="BMC_dom"/>
</dbReference>
<dbReference type="InterPro" id="IPR050575">
    <property type="entry name" value="BMC_shell"/>
</dbReference>
<dbReference type="InterPro" id="IPR046380">
    <property type="entry name" value="CcmK"/>
</dbReference>
<dbReference type="InterPro" id="IPR037233">
    <property type="entry name" value="CcmK-like_sf"/>
</dbReference>
<dbReference type="InterPro" id="IPR044872">
    <property type="entry name" value="CcmK/CsoS1_BMC"/>
</dbReference>
<dbReference type="PANTHER" id="PTHR33941:SF13">
    <property type="entry name" value="CARBOXYSOME SHELL PROTEIN CCMK4"/>
    <property type="match status" value="1"/>
</dbReference>
<dbReference type="PANTHER" id="PTHR33941">
    <property type="entry name" value="PROPANEDIOL UTILIZATION PROTEIN PDUA"/>
    <property type="match status" value="1"/>
</dbReference>
<dbReference type="Pfam" id="PF00936">
    <property type="entry name" value="BMC"/>
    <property type="match status" value="1"/>
</dbReference>
<dbReference type="SMART" id="SM00877">
    <property type="entry name" value="BMC"/>
    <property type="match status" value="1"/>
</dbReference>
<dbReference type="SUPFAM" id="SSF143414">
    <property type="entry name" value="CcmK-like"/>
    <property type="match status" value="1"/>
</dbReference>
<dbReference type="PROSITE" id="PS01139">
    <property type="entry name" value="BMC_1"/>
    <property type="match status" value="1"/>
</dbReference>
<dbReference type="PROSITE" id="PS51930">
    <property type="entry name" value="BMC_2"/>
    <property type="match status" value="1"/>
</dbReference>
<organism>
    <name type="scientific">Thermosynechococcus vestitus (strain NIES-2133 / IAM M-273 / BP-1)</name>
    <dbReference type="NCBI Taxonomy" id="197221"/>
    <lineage>
        <taxon>Bacteria</taxon>
        <taxon>Bacillati</taxon>
        <taxon>Cyanobacteriota</taxon>
        <taxon>Cyanophyceae</taxon>
        <taxon>Acaryochloridales</taxon>
        <taxon>Thermosynechococcaceae</taxon>
        <taxon>Thermosynechococcus</taxon>
    </lineage>
</organism>
<proteinExistence type="evidence at protein level"/>
<evidence type="ECO:0000250" key="1">
    <source>
        <dbReference type="UniProtKB" id="Q03511"/>
    </source>
</evidence>
<evidence type="ECO:0000255" key="2">
    <source>
        <dbReference type="HAMAP-Rule" id="MF_00854"/>
    </source>
</evidence>
<evidence type="ECO:0000269" key="3">
    <source>
    </source>
</evidence>
<evidence type="ECO:0000303" key="4">
    <source>
    </source>
</evidence>
<evidence type="ECO:0000305" key="5">
    <source>
    </source>
</evidence>
<evidence type="ECO:0000305" key="6">
    <source>
    </source>
</evidence>
<evidence type="ECO:0007744" key="7">
    <source>
        <dbReference type="PDB" id="3SSQ"/>
    </source>
</evidence>
<evidence type="ECO:0007744" key="8">
    <source>
        <dbReference type="PDB" id="3SSR"/>
    </source>
</evidence>
<evidence type="ECO:0007829" key="9">
    <source>
        <dbReference type="PDB" id="3SSR"/>
    </source>
</evidence>
<accession>Q8DKB2</accession>
<name>CCMK2_THEVB</name>
<feature type="chain" id="PRO_0000451240" description="Carboxysome shell protein CcmK2">
    <location>
        <begin position="1"/>
        <end position="102"/>
    </location>
</feature>
<feature type="domain" description="BMC" evidence="2">
    <location>
        <begin position="4"/>
        <end position="90"/>
    </location>
</feature>
<feature type="mutagenesis site" description="Form hexamers poorly." evidence="3">
    <location>
        <begin position="91"/>
        <end position="102"/>
    </location>
</feature>
<feature type="mutagenesis site" description="Form hexamers poorly." evidence="3">
    <original>E</original>
    <variation>A</variation>
    <location>
        <position position="95"/>
    </location>
</feature>
<feature type="strand" evidence="9">
    <location>
        <begin position="3"/>
        <end position="12"/>
    </location>
</feature>
<feature type="helix" evidence="9">
    <location>
        <begin position="13"/>
        <end position="26"/>
    </location>
</feature>
<feature type="strand" evidence="9">
    <location>
        <begin position="27"/>
        <end position="38"/>
    </location>
</feature>
<feature type="strand" evidence="9">
    <location>
        <begin position="41"/>
        <end position="49"/>
    </location>
</feature>
<feature type="helix" evidence="9">
    <location>
        <begin position="50"/>
        <end position="66"/>
    </location>
</feature>
<feature type="strand" evidence="9">
    <location>
        <begin position="72"/>
        <end position="80"/>
    </location>
</feature>
<feature type="helix" evidence="9">
    <location>
        <begin position="83"/>
        <end position="86"/>
    </location>
</feature>
<feature type="helix" evidence="9">
    <location>
        <begin position="95"/>
        <end position="99"/>
    </location>
</feature>
<reference key="1">
    <citation type="journal article" date="2002" name="DNA Res.">
        <title>Complete genome structure of the thermophilic cyanobacterium Thermosynechococcus elongatus BP-1.</title>
        <authorList>
            <person name="Nakamura Y."/>
            <person name="Kaneko T."/>
            <person name="Sato S."/>
            <person name="Ikeuchi M."/>
            <person name="Katoh H."/>
            <person name="Sasamoto S."/>
            <person name="Watanabe A."/>
            <person name="Iriguchi M."/>
            <person name="Kawashima K."/>
            <person name="Kimura T."/>
            <person name="Kishida Y."/>
            <person name="Kiyokawa C."/>
            <person name="Kohara M."/>
            <person name="Matsumoto M."/>
            <person name="Matsuno A."/>
            <person name="Nakazaki N."/>
            <person name="Shimpo S."/>
            <person name="Sugimoto M."/>
            <person name="Takeuchi C."/>
            <person name="Yamada M."/>
            <person name="Tabata S."/>
        </authorList>
    </citation>
    <scope>NUCLEOTIDE SEQUENCE [LARGE SCALE GENOMIC DNA]</scope>
    <source>
        <strain>NIES-2133 / IAM M-273 / BP-1</strain>
    </source>
</reference>
<reference key="2">
    <citation type="journal article" date="2014" name="Photosyn. Res.">
        <title>Interactions and structural variability of beta-carboxysomal shell protein CcmL.</title>
        <authorList>
            <person name="Keeling T.J."/>
            <person name="Samborska B."/>
            <person name="Demers R.W."/>
            <person name="Kimber M.S."/>
        </authorList>
    </citation>
    <scope>SUBUNIT</scope>
    <source>
        <strain>NIES-2133 / IAM M-273 / BP-1</strain>
    </source>
</reference>
<reference evidence="7 8" key="3">
    <citation type="journal article" date="2012" name="Structure">
        <title>A dodecameric CcmK2 structure suggests beta-carboxysomal shell facets have a double-layered organization.</title>
        <authorList>
            <person name="Samborska B."/>
            <person name="Kimber M.S."/>
        </authorList>
    </citation>
    <scope>X-RAY CRYSTALLOGRAPHY (1.60 ANGSTROMS)</scope>
    <scope>SUBUNIT</scope>
    <scope>DOMAIN</scope>
    <scope>MUTAGENESIS OF 91-ILE--ASN-102 AND GLU-95</scope>
    <source>
        <strain>NIES-2133 / IAM M-273 / BP-1</strain>
    </source>
</reference>
<comment type="function">
    <text evidence="2 5">Probably the major shell protein of the carboxysome, a polyhedral inclusion where RuBisCO (ribulose bisphosphate carboxylase, rbcL-rbcS) is sequestered. Assembles into hexamers which make sheets that form the facets of the polyhedral carboxysome. The hexamer central pore probably regulates metabolite flux.</text>
</comment>
<comment type="subunit">
    <text evidence="1 3 6">Homohexamer. Stacked hexamers, with the concave faces together, have also been crystallized. Interacts preferentially with itself, then with CcmK1 and CcmK4a in vitro (PubMed:22748766). May interact with CcmL, this occurs at very high CcmK2 concentrations (Probable). Interacts with CcmN and CcmO in the carboxysome (By similarity).</text>
</comment>
<comment type="interaction">
    <interactant intactId="EBI-15992959">
        <id>Q8DKB2</id>
    </interactant>
    <interactant intactId="EBI-15992989">
        <id>Q8DKB3</id>
        <label>ccmK1</label>
    </interactant>
    <organismsDiffer>false</organismsDiffer>
    <experiments>2</experiments>
</comment>
<comment type="interaction">
    <interactant intactId="EBI-15992959">
        <id>Q8DKB2</id>
    </interactant>
    <interactant intactId="EBI-15992959">
        <id>Q8DKB2</id>
        <label>ccmK2</label>
    </interactant>
    <organismsDiffer>false</organismsDiffer>
    <experiments>5</experiments>
</comment>
<comment type="subcellular location">
    <subcellularLocation>
        <location evidence="2 5 6">Carboxysome</location>
    </subcellularLocation>
    <text evidence="3">This cyanobacterium makes beta-type carboxysomes.</text>
</comment>
<comment type="domain">
    <text evidence="3">The tight homhexamer forms an irregular pore with an opening about 4.8 X 6.5 Angstroms.</text>
</comment>
<comment type="similarity">
    <text evidence="2">Belongs to the bacterial microcompartments protein family. CcmK subfamily.</text>
</comment>